<accession>Q7A417</accession>
<proteinExistence type="evidence at protein level"/>
<evidence type="ECO:0000250" key="1"/>
<evidence type="ECO:0000305" key="2"/>
<organism>
    <name type="scientific">Staphylococcus aureus (strain N315)</name>
    <dbReference type="NCBI Taxonomy" id="158879"/>
    <lineage>
        <taxon>Bacteria</taxon>
        <taxon>Bacillati</taxon>
        <taxon>Bacillota</taxon>
        <taxon>Bacilli</taxon>
        <taxon>Bacillales</taxon>
        <taxon>Staphylococcaceae</taxon>
        <taxon>Staphylococcus</taxon>
    </lineage>
</organism>
<keyword id="KW-0520">NAD</keyword>
<keyword id="KW-0560">Oxidoreductase</keyword>
<feature type="chain" id="PRO_0000312185" description="Putative 2-hydroxyacid dehydrogenase SA2098">
    <location>
        <begin position="1"/>
        <end position="317"/>
    </location>
</feature>
<feature type="active site" evidence="1">
    <location>
        <position position="236"/>
    </location>
</feature>
<feature type="active site" evidence="1">
    <location>
        <position position="265"/>
    </location>
</feature>
<feature type="active site" description="Proton donor" evidence="1">
    <location>
        <position position="283"/>
    </location>
</feature>
<feature type="binding site" evidence="1">
    <location>
        <begin position="155"/>
        <end position="156"/>
    </location>
    <ligand>
        <name>NAD(+)</name>
        <dbReference type="ChEBI" id="CHEBI:57540"/>
    </ligand>
</feature>
<feature type="binding site" evidence="1">
    <location>
        <begin position="234"/>
        <end position="236"/>
    </location>
    <ligand>
        <name>NAD(+)</name>
        <dbReference type="ChEBI" id="CHEBI:57540"/>
    </ligand>
</feature>
<feature type="binding site" evidence="1">
    <location>
        <position position="260"/>
    </location>
    <ligand>
        <name>NAD(+)</name>
        <dbReference type="ChEBI" id="CHEBI:57540"/>
    </ligand>
</feature>
<feature type="binding site" evidence="1">
    <location>
        <begin position="283"/>
        <end position="286"/>
    </location>
    <ligand>
        <name>NAD(+)</name>
        <dbReference type="ChEBI" id="CHEBI:57540"/>
    </ligand>
</feature>
<sequence>MEKVYVAGAIPEVGLKLLQEHFEVEMYEGKGLVDKDTLIKGVKNATALISLLSTNVDKDVIDAGKDLKIIANYGAGFNNIDIEYAREKSIDVTNTPKASTNATADLTIGLVLAVARRIVEGDQLSRTTGFDGWAPLFFRGREVSGKTIGIIGLGEIGSAVARRARAFDMDVLYTGPNRKEEKEREIGAKYVDLDTLLKNADFITINAAYNPKMHHLIDTEQFKMMKSTVYLINASRGPIVHEQALVQALKDNEIEGAALDVYEFEPDITDDLKSLNNVVLTPHIGNATFEARDMMSKIVANAAISAVQGEKPQFVVN</sequence>
<gene>
    <name type="ordered locus">SA2098</name>
</gene>
<comment type="similarity">
    <text evidence="2">Belongs to the D-isomer specific 2-hydroxyacid dehydrogenase family.</text>
</comment>
<reference key="1">
    <citation type="journal article" date="2001" name="Lancet">
        <title>Whole genome sequencing of meticillin-resistant Staphylococcus aureus.</title>
        <authorList>
            <person name="Kuroda M."/>
            <person name="Ohta T."/>
            <person name="Uchiyama I."/>
            <person name="Baba T."/>
            <person name="Yuzawa H."/>
            <person name="Kobayashi I."/>
            <person name="Cui L."/>
            <person name="Oguchi A."/>
            <person name="Aoki K."/>
            <person name="Nagai Y."/>
            <person name="Lian J.-Q."/>
            <person name="Ito T."/>
            <person name="Kanamori M."/>
            <person name="Matsumaru H."/>
            <person name="Maruyama A."/>
            <person name="Murakami H."/>
            <person name="Hosoyama A."/>
            <person name="Mizutani-Ui Y."/>
            <person name="Takahashi N.K."/>
            <person name="Sawano T."/>
            <person name="Inoue R."/>
            <person name="Kaito C."/>
            <person name="Sekimizu K."/>
            <person name="Hirakawa H."/>
            <person name="Kuhara S."/>
            <person name="Goto S."/>
            <person name="Yabuzaki J."/>
            <person name="Kanehisa M."/>
            <person name="Yamashita A."/>
            <person name="Oshima K."/>
            <person name="Furuya K."/>
            <person name="Yoshino C."/>
            <person name="Shiba T."/>
            <person name="Hattori M."/>
            <person name="Ogasawara N."/>
            <person name="Hayashi H."/>
            <person name="Hiramatsu K."/>
        </authorList>
    </citation>
    <scope>NUCLEOTIDE SEQUENCE [LARGE SCALE GENOMIC DNA]</scope>
    <source>
        <strain>N315</strain>
    </source>
</reference>
<reference key="2">
    <citation type="journal article" date="2005" name="J. Microbiol. Methods">
        <title>Correlation of proteomic and transcriptomic profiles of Staphylococcus aureus during the post-exponential phase of growth.</title>
        <authorList>
            <person name="Scherl A."/>
            <person name="Francois P."/>
            <person name="Bento M."/>
            <person name="Deshusses J.M."/>
            <person name="Charbonnier Y."/>
            <person name="Converset V."/>
            <person name="Huyghe A."/>
            <person name="Walter N."/>
            <person name="Hoogland C."/>
            <person name="Appel R.D."/>
            <person name="Sanchez J.-C."/>
            <person name="Zimmermann-Ivol C.G."/>
            <person name="Corthals G.L."/>
            <person name="Hochstrasser D.F."/>
            <person name="Schrenzel J."/>
        </authorList>
    </citation>
    <scope>IDENTIFICATION BY MASS SPECTROMETRY</scope>
    <source>
        <strain>N315</strain>
    </source>
</reference>
<reference key="3">
    <citation type="submission" date="2007-10" db="UniProtKB">
        <title>Shotgun proteomic analysis of total and membrane protein extracts of S. aureus strain N315.</title>
        <authorList>
            <person name="Vaezzadeh A.R."/>
            <person name="Deshusses J."/>
            <person name="Lescuyer P."/>
            <person name="Hochstrasser D.F."/>
        </authorList>
    </citation>
    <scope>IDENTIFICATION BY MASS SPECTROMETRY [LARGE SCALE ANALYSIS]</scope>
    <source>
        <strain>N315</strain>
    </source>
</reference>
<dbReference type="EC" id="1.1.1.-"/>
<dbReference type="EMBL" id="BA000018">
    <property type="protein sequence ID" value="BAB43397.1"/>
    <property type="molecule type" value="Genomic_DNA"/>
</dbReference>
<dbReference type="PIR" id="D90029">
    <property type="entry name" value="D90029"/>
</dbReference>
<dbReference type="RefSeq" id="WP_000417018.1">
    <property type="nucleotide sequence ID" value="NC_002745.2"/>
</dbReference>
<dbReference type="SMR" id="Q7A417"/>
<dbReference type="EnsemblBacteria" id="BAB43397">
    <property type="protein sequence ID" value="BAB43397"/>
    <property type="gene ID" value="BAB43397"/>
</dbReference>
<dbReference type="KEGG" id="sau:SA2098"/>
<dbReference type="HOGENOM" id="CLU_019796_1_2_9"/>
<dbReference type="GO" id="GO:0051287">
    <property type="term" value="F:NAD binding"/>
    <property type="evidence" value="ECO:0007669"/>
    <property type="project" value="InterPro"/>
</dbReference>
<dbReference type="GO" id="GO:0016616">
    <property type="term" value="F:oxidoreductase activity, acting on the CH-OH group of donors, NAD or NADP as acceptor"/>
    <property type="evidence" value="ECO:0007669"/>
    <property type="project" value="InterPro"/>
</dbReference>
<dbReference type="CDD" id="cd12178">
    <property type="entry name" value="2-Hacid_dh_13"/>
    <property type="match status" value="1"/>
</dbReference>
<dbReference type="FunFam" id="3.40.50.720:FF:000462">
    <property type="entry name" value="Glyoxylate reductase (NADP+)"/>
    <property type="match status" value="1"/>
</dbReference>
<dbReference type="Gene3D" id="3.40.50.720">
    <property type="entry name" value="NAD(P)-binding Rossmann-like Domain"/>
    <property type="match status" value="2"/>
</dbReference>
<dbReference type="InterPro" id="IPR050857">
    <property type="entry name" value="D-2-hydroxyacid_DH"/>
</dbReference>
<dbReference type="InterPro" id="IPR006139">
    <property type="entry name" value="D-isomer_2_OHA_DH_cat_dom"/>
</dbReference>
<dbReference type="InterPro" id="IPR006140">
    <property type="entry name" value="D-isomer_DH_NAD-bd"/>
</dbReference>
<dbReference type="InterPro" id="IPR036291">
    <property type="entry name" value="NAD(P)-bd_dom_sf"/>
</dbReference>
<dbReference type="PANTHER" id="PTHR42789">
    <property type="entry name" value="D-ISOMER SPECIFIC 2-HYDROXYACID DEHYDROGENASE FAMILY PROTEIN (AFU_ORTHOLOGUE AFUA_6G10090)"/>
    <property type="match status" value="1"/>
</dbReference>
<dbReference type="PANTHER" id="PTHR42789:SF1">
    <property type="entry name" value="D-ISOMER SPECIFIC 2-HYDROXYACID DEHYDROGENASE FAMILY PROTEIN (AFU_ORTHOLOGUE AFUA_6G10090)"/>
    <property type="match status" value="1"/>
</dbReference>
<dbReference type="Pfam" id="PF00389">
    <property type="entry name" value="2-Hacid_dh"/>
    <property type="match status" value="1"/>
</dbReference>
<dbReference type="Pfam" id="PF02826">
    <property type="entry name" value="2-Hacid_dh_C"/>
    <property type="match status" value="1"/>
</dbReference>
<dbReference type="SUPFAM" id="SSF52283">
    <property type="entry name" value="Formate/glycerate dehydrogenase catalytic domain-like"/>
    <property type="match status" value="1"/>
</dbReference>
<dbReference type="SUPFAM" id="SSF51735">
    <property type="entry name" value="NAD(P)-binding Rossmann-fold domains"/>
    <property type="match status" value="1"/>
</dbReference>
<name>Y2098_STAAN</name>
<protein>
    <recommendedName>
        <fullName>Putative 2-hydroxyacid dehydrogenase SA2098</fullName>
        <ecNumber>1.1.1.-</ecNumber>
    </recommendedName>
</protein>